<feature type="chain" id="PRO_0000215602" description="UDP-N-acetylglucosamine transferase subunit ALG13">
    <location>
        <begin position="1"/>
        <end position="197"/>
    </location>
</feature>
<dbReference type="EC" id="2.4.1.141"/>
<dbReference type="EMBL" id="CR382121">
    <property type="protein sequence ID" value="CAH02797.1"/>
    <property type="molecule type" value="Genomic_DNA"/>
</dbReference>
<dbReference type="RefSeq" id="XP_451209.1">
    <property type="nucleotide sequence ID" value="XM_451209.1"/>
</dbReference>
<dbReference type="SMR" id="Q6CXY0"/>
<dbReference type="FunCoup" id="Q6CXY0">
    <property type="interactions" value="342"/>
</dbReference>
<dbReference type="STRING" id="284590.Q6CXY0"/>
<dbReference type="PaxDb" id="284590-Q6CXY0"/>
<dbReference type="KEGG" id="kla:KLLA0_A04774g"/>
<dbReference type="eggNOG" id="KOG3349">
    <property type="taxonomic scope" value="Eukaryota"/>
</dbReference>
<dbReference type="HOGENOM" id="CLU_085408_2_0_1"/>
<dbReference type="InParanoid" id="Q6CXY0"/>
<dbReference type="OMA" id="ILDAWKM"/>
<dbReference type="Proteomes" id="UP000000598">
    <property type="component" value="Chromosome A"/>
</dbReference>
<dbReference type="GO" id="GO:0043541">
    <property type="term" value="C:UDP-N-acetylglucosamine transferase complex"/>
    <property type="evidence" value="ECO:0007669"/>
    <property type="project" value="TreeGrafter"/>
</dbReference>
<dbReference type="GO" id="GO:0004577">
    <property type="term" value="F:N-acetylglucosaminyldiphosphodolichol N-acetylglucosaminyltransferase activity"/>
    <property type="evidence" value="ECO:0007669"/>
    <property type="project" value="UniProtKB-EC"/>
</dbReference>
<dbReference type="GO" id="GO:0006488">
    <property type="term" value="P:dolichol-linked oligosaccharide biosynthetic process"/>
    <property type="evidence" value="ECO:0007669"/>
    <property type="project" value="TreeGrafter"/>
</dbReference>
<dbReference type="Gene3D" id="3.40.50.2000">
    <property type="entry name" value="Glycogen Phosphorylase B"/>
    <property type="match status" value="1"/>
</dbReference>
<dbReference type="InterPro" id="IPR007235">
    <property type="entry name" value="Glyco_trans_28_C"/>
</dbReference>
<dbReference type="InterPro" id="IPR052474">
    <property type="entry name" value="UDP-GlcNAc_transferase"/>
</dbReference>
<dbReference type="PANTHER" id="PTHR47043">
    <property type="entry name" value="UDP-N-ACETYLGLUCOSAMINE TRANSFERASE SUBUNIT ALG13"/>
    <property type="match status" value="1"/>
</dbReference>
<dbReference type="PANTHER" id="PTHR47043:SF1">
    <property type="entry name" value="UDP-N-ACETYLGLUCOSAMINE TRANSFERASE SUBUNIT ALG13"/>
    <property type="match status" value="1"/>
</dbReference>
<dbReference type="Pfam" id="PF04101">
    <property type="entry name" value="Glyco_tran_28_C"/>
    <property type="match status" value="1"/>
</dbReference>
<dbReference type="SUPFAM" id="SSF53756">
    <property type="entry name" value="UDP-Glycosyltransferase/glycogen phosphorylase"/>
    <property type="match status" value="1"/>
</dbReference>
<gene>
    <name type="primary">ALG13</name>
    <name type="ordered locus">KLLA0A04774g</name>
</gene>
<accession>Q6CXY0</accession>
<reference key="1">
    <citation type="journal article" date="2004" name="Nature">
        <title>Genome evolution in yeasts.</title>
        <authorList>
            <person name="Dujon B."/>
            <person name="Sherman D."/>
            <person name="Fischer G."/>
            <person name="Durrens P."/>
            <person name="Casaregola S."/>
            <person name="Lafontaine I."/>
            <person name="de Montigny J."/>
            <person name="Marck C."/>
            <person name="Neuveglise C."/>
            <person name="Talla E."/>
            <person name="Goffard N."/>
            <person name="Frangeul L."/>
            <person name="Aigle M."/>
            <person name="Anthouard V."/>
            <person name="Babour A."/>
            <person name="Barbe V."/>
            <person name="Barnay S."/>
            <person name="Blanchin S."/>
            <person name="Beckerich J.-M."/>
            <person name="Beyne E."/>
            <person name="Bleykasten C."/>
            <person name="Boisrame A."/>
            <person name="Boyer J."/>
            <person name="Cattolico L."/>
            <person name="Confanioleri F."/>
            <person name="de Daruvar A."/>
            <person name="Despons L."/>
            <person name="Fabre E."/>
            <person name="Fairhead C."/>
            <person name="Ferry-Dumazet H."/>
            <person name="Groppi A."/>
            <person name="Hantraye F."/>
            <person name="Hennequin C."/>
            <person name="Jauniaux N."/>
            <person name="Joyet P."/>
            <person name="Kachouri R."/>
            <person name="Kerrest A."/>
            <person name="Koszul R."/>
            <person name="Lemaire M."/>
            <person name="Lesur I."/>
            <person name="Ma L."/>
            <person name="Muller H."/>
            <person name="Nicaud J.-M."/>
            <person name="Nikolski M."/>
            <person name="Oztas S."/>
            <person name="Ozier-Kalogeropoulos O."/>
            <person name="Pellenz S."/>
            <person name="Potier S."/>
            <person name="Richard G.-F."/>
            <person name="Straub M.-L."/>
            <person name="Suleau A."/>
            <person name="Swennen D."/>
            <person name="Tekaia F."/>
            <person name="Wesolowski-Louvel M."/>
            <person name="Westhof E."/>
            <person name="Wirth B."/>
            <person name="Zeniou-Meyer M."/>
            <person name="Zivanovic Y."/>
            <person name="Bolotin-Fukuhara M."/>
            <person name="Thierry A."/>
            <person name="Bouchier C."/>
            <person name="Caudron B."/>
            <person name="Scarpelli C."/>
            <person name="Gaillardin C."/>
            <person name="Weissenbach J."/>
            <person name="Wincker P."/>
            <person name="Souciet J.-L."/>
        </authorList>
    </citation>
    <scope>NUCLEOTIDE SEQUENCE [LARGE SCALE GENOMIC DNA]</scope>
    <source>
        <strain>ATCC 8585 / CBS 2359 / DSM 70799 / NBRC 1267 / NRRL Y-1140 / WM37</strain>
    </source>
</reference>
<keyword id="KW-0256">Endoplasmic reticulum</keyword>
<keyword id="KW-0328">Glycosyltransferase</keyword>
<keyword id="KW-1185">Reference proteome</keyword>
<keyword id="KW-0808">Transferase</keyword>
<organism>
    <name type="scientific">Kluyveromyces lactis (strain ATCC 8585 / CBS 2359 / DSM 70799 / NBRC 1267 / NRRL Y-1140 / WM37)</name>
    <name type="common">Yeast</name>
    <name type="synonym">Candida sphaerica</name>
    <dbReference type="NCBI Taxonomy" id="284590"/>
    <lineage>
        <taxon>Eukaryota</taxon>
        <taxon>Fungi</taxon>
        <taxon>Dikarya</taxon>
        <taxon>Ascomycota</taxon>
        <taxon>Saccharomycotina</taxon>
        <taxon>Saccharomycetes</taxon>
        <taxon>Saccharomycetales</taxon>
        <taxon>Saccharomycetaceae</taxon>
        <taxon>Kluyveromyces</taxon>
    </lineage>
</organism>
<name>ALG13_KLULA</name>
<protein>
    <recommendedName>
        <fullName>UDP-N-acetylglucosamine transferase subunit ALG13</fullName>
        <ecNumber>2.4.1.141</ecNumber>
    </recommendedName>
    <alternativeName>
        <fullName>Asparagine-linked glycosylation protein 13</fullName>
    </alternativeName>
</protein>
<evidence type="ECO:0000250" key="1"/>
<evidence type="ECO:0000305" key="2"/>
<sequence length="197" mass="22234">MNNTVLVTCGATVSFPRLVETVLDRSVTEKLKVLGYGRIVIQYGRGFSDTFLQLVEKHLGLFTEKKSCGIKVLDKIENLKVISVDGIEICGFEFSHDIEKLIANNIDLVISHAGTGSILDSLRVGKKLIVVVNDTLMDNHQQLIADKFEQQKLLWSVHANTEELLRALDRSENEELLKIDNTYNKQFEKLLYNVAID</sequence>
<comment type="function">
    <text evidence="1">Involved in protein N-glycosylation. Essential for the second step of the dolichol-linked oligosaccharide pathway (By similarity).</text>
</comment>
<comment type="catalytic activity">
    <reaction>
        <text>an N-acetyl-alpha-D-glucosaminyl-diphospho-di-trans,poly-cis-dolichol + UDP-N-acetyl-alpha-D-glucosamine = an N,N'-diacetylchitobiosyl-diphospho-di-trans,poly-cis-dolichol + UDP + H(+)</text>
        <dbReference type="Rhea" id="RHEA:23380"/>
        <dbReference type="Rhea" id="RHEA-COMP:19507"/>
        <dbReference type="Rhea" id="RHEA-COMP:19510"/>
        <dbReference type="ChEBI" id="CHEBI:15378"/>
        <dbReference type="ChEBI" id="CHEBI:57269"/>
        <dbReference type="ChEBI" id="CHEBI:57705"/>
        <dbReference type="ChEBI" id="CHEBI:58223"/>
        <dbReference type="ChEBI" id="CHEBI:58427"/>
        <dbReference type="EC" id="2.4.1.141"/>
    </reaction>
</comment>
<comment type="subunit">
    <text evidence="1">Heterodimer with ALG14 to form a functional enzyme.</text>
</comment>
<comment type="subcellular location">
    <subcellularLocation>
        <location evidence="1">Endoplasmic reticulum</location>
    </subcellularLocation>
</comment>
<comment type="similarity">
    <text evidence="2">Belongs to the glycosyltransferase 28 family.</text>
</comment>
<proteinExistence type="inferred from homology"/>